<evidence type="ECO:0000250" key="1">
    <source>
        <dbReference type="UniProtKB" id="C6KI89"/>
    </source>
</evidence>
<evidence type="ECO:0000250" key="2">
    <source>
        <dbReference type="UniProtKB" id="Q6ZRH7"/>
    </source>
</evidence>
<evidence type="ECO:0000255" key="3"/>
<evidence type="ECO:0000256" key="4">
    <source>
        <dbReference type="SAM" id="MobiDB-lite"/>
    </source>
</evidence>
<evidence type="ECO:0000305" key="5"/>
<protein>
    <recommendedName>
        <fullName evidence="2">Cation channel sperm-associated auxiliary subunit gamma</fullName>
    </recommendedName>
</protein>
<reference key="1">
    <citation type="submission" date="2005-06" db="EMBL/GenBank/DDBJ databases">
        <title>DNA sequences of macaque genes expressed in brain or testis and its evolutionary implications.</title>
        <authorList>
            <consortium name="International consortium for macaque cDNA sequencing and analysis"/>
        </authorList>
    </citation>
    <scope>NUCLEOTIDE SEQUENCE [LARGE SCALE MRNA]</scope>
    <source>
        <tissue>Testis</tissue>
    </source>
</reference>
<sequence>MCGPAMFPAGPRWPRVRVLQVLWALLAVLLASRRLWAIKDFEECTWQVVLNEFKRVGENGASDRFFEQELVDTVGNLFHMLVDSPIDPREKYLGFPYYLKINYSCEEKHSEDLVRMGHLTGLKPVVLVTFQSPVNFYRWKIEQLQIQMEAAPFRSKEPCIAEEVCSMSWYTPMPIKNGSVVTRVDVSSNGLGTFIPDKRFQVNINGFLKRNQDNDIQFTVGDELFNLMPQYFVGISSRPLWHTVDQSPVLILGGIPNEKYVLMTDTSFKDFSLVELSIDSCWVGSFYCPQSGFTATIYDTVATESTLFIRQNQLVYYFTGTYTTLYERNRGSGSWVRVLASECIKKLCPVYFHSNGSEYIMALTTGKHEGFVHFGTIRDGQVSFEMLPREWSVCEQIGVTTCSIIWSDYIAGEYTLLLLVESEYENASKRFQVVSYNTANDDLELLYHIPEFIPEARGLEFLMILGTESYTNTVMTPKGISCNPYNHLIFIWGNFLLQSSNKENFIYLADFPKELSIKYMTRSFRGAVAIVTETEEIWYLLEGTYRVYRLFPSKGWKVHISLQLMQQSSLYASNETMLTLFYEGSKLYQLVYLMNNQKGQLVKRLMPVEQLLMYQQHTSHYDLDRKGGYLMLSFTNFCPFSVMRLRNLPGPQRYTRQERYRARPPHVLERSGFHNENSLAIYQGLIYYLLWLHSVYDKPYADPVHDPTWRWWENNKQDQDYYFFLASNWRSAGGVFIEMDSYEKIYNLKSAYELPERIFLDKGTEYSFAIFLSAQSRSFRTMADLGTVFELHSHVDVGVVLADPGCIEASVKQEVLINRNAVLFSITLKDKKVCYDQGISGHHLMKSSMTVNVVGSSGLCFQETHAGARMQGNLMVPVFIGCPPGKRLAFDITYTLEYSRLKNKHYFDCVQVDPEMPCFLFRDIFYPFFLIQDLVTGDSGSFQGSYVLLVVGGGPTLDTLKDYNKDEIYRFNSPLDKTHSLIWTTRTKRTTKDSAFHIMSHESPGIEWLCLENAPCYDNVPQGIFAPEFFFKVLVSNRGVDTSTYCNYQLTFLLHIHGLPLSPKRALFILMVSLSVFVGLVIFYIAFCLLWPLVVKGCTMIRWKINDIIASESYYTYASISGMSSMQSLRRSRMGSMFSSRMTEDKAEPKEAVERQLMT</sequence>
<proteinExistence type="evidence at transcript level"/>
<comment type="function">
    <text evidence="1">Auxiliary component of the CatSper complex, a complex involved in sperm cell hyperactivation. Sperm cell hyperactivation is needed for sperm motility which is essential late in the preparation of sperm for fertilization.</text>
</comment>
<comment type="subunit">
    <text evidence="1">Component of the CatSper complex or CatSpermasome composed of the core pore-forming members CATSPER1, CATSPER2, CATSPER3 and CATSPER4 as well as auxiliary members CATSPERB, CATSPERG, CATSPERD, CATSPERE, CATSPERZ, SCLO6C1, TMEM249, TMEM262 and EFCAB9. HSPA1 may be an additional auxiliary complex member. The core complex members CATSPER1, CATSPER2, CATSPER3 and CATSPER4 form a heterotetrameric channel. The auxiliary CATSPERB, CATSPERG, CATSPERD and CATSPERE subunits form a pavilion-like structure over the pore which stabilizes the complex through interactions with CATSPER4, CATSPER3, CATSPER1 and CATSPER2 respectively. TMEM262/CATSPERH interacts with CATSPERB, further stabilizing the complex. C2CD6/CATSPERT interacts at least with CATSPERD and is required for targeting the CatSper complex in the flagellar membrane.</text>
</comment>
<comment type="subcellular location">
    <subcellularLocation>
        <location evidence="5">Cell projection</location>
        <location evidence="5">Cilium</location>
        <location evidence="5">Flagellum membrane</location>
        <topology evidence="3">Single-pass type I membrane protein</topology>
    </subcellularLocation>
</comment>
<comment type="similarity">
    <text evidence="5">Belongs to the CATSPERG family.</text>
</comment>
<comment type="caution">
    <text evidence="5">In mouse, Slco6c1 is an additional auxiliary subunit of the CatSper complex. It is unclear if the related SLCO6A1 protein performs the same role in non-rodent species.</text>
</comment>
<name>CTSRG_MACFA</name>
<dbReference type="EMBL" id="AB169275">
    <property type="protein sequence ID" value="BAE01363.1"/>
    <property type="molecule type" value="mRNA"/>
</dbReference>
<dbReference type="RefSeq" id="NP_001306307.1">
    <property type="nucleotide sequence ID" value="NM_001319378.1"/>
</dbReference>
<dbReference type="SMR" id="Q4R6B2"/>
<dbReference type="STRING" id="9541.ENSMFAP00000039767"/>
<dbReference type="GlyCosmos" id="Q4R6B2">
    <property type="glycosylation" value="5 sites, No reported glycans"/>
</dbReference>
<dbReference type="eggNOG" id="ENOG502QWAR">
    <property type="taxonomic scope" value="Eukaryota"/>
</dbReference>
<dbReference type="Proteomes" id="UP000233100">
    <property type="component" value="Unplaced"/>
</dbReference>
<dbReference type="GO" id="GO:0036128">
    <property type="term" value="C:CatSper complex"/>
    <property type="evidence" value="ECO:0000250"/>
    <property type="project" value="UniProtKB"/>
</dbReference>
<dbReference type="GO" id="GO:0097228">
    <property type="term" value="C:sperm principal piece"/>
    <property type="evidence" value="ECO:0007669"/>
    <property type="project" value="InterPro"/>
</dbReference>
<dbReference type="GO" id="GO:0030154">
    <property type="term" value="P:cell differentiation"/>
    <property type="evidence" value="ECO:0007669"/>
    <property type="project" value="UniProtKB-KW"/>
</dbReference>
<dbReference type="GO" id="GO:0007283">
    <property type="term" value="P:spermatogenesis"/>
    <property type="evidence" value="ECO:0007669"/>
    <property type="project" value="UniProtKB-KW"/>
</dbReference>
<dbReference type="InterPro" id="IPR028246">
    <property type="entry name" value="CATSPERG"/>
</dbReference>
<dbReference type="InterPro" id="IPR053871">
    <property type="entry name" value="CATSPERG_b-prop"/>
</dbReference>
<dbReference type="InterPro" id="IPR053873">
    <property type="entry name" value="CATSPERG_C"/>
</dbReference>
<dbReference type="InterPro" id="IPR053874">
    <property type="entry name" value="CATSPERG_Ig-like"/>
</dbReference>
<dbReference type="InterPro" id="IPR053872">
    <property type="entry name" value="CATSPERG_N"/>
</dbReference>
<dbReference type="PANTHER" id="PTHR14327:SF1">
    <property type="entry name" value="CATION CHANNEL SPERM-ASSOCIATED AUXILIARY SUBUNIT GAMMA"/>
    <property type="match status" value="1"/>
</dbReference>
<dbReference type="PANTHER" id="PTHR14327">
    <property type="entry name" value="CATION CHANNEL SPERM-ASSOCIATED PROTEIN SUBUNIT GAMMA"/>
    <property type="match status" value="1"/>
</dbReference>
<dbReference type="Pfam" id="PF15064">
    <property type="entry name" value="CATSPERG_beta-prop"/>
    <property type="match status" value="1"/>
</dbReference>
<dbReference type="Pfam" id="PF22846">
    <property type="entry name" value="CATSPERG_C"/>
    <property type="match status" value="1"/>
</dbReference>
<dbReference type="Pfam" id="PF22851">
    <property type="entry name" value="CATSPERG_Ig-like"/>
    <property type="match status" value="1"/>
</dbReference>
<dbReference type="Pfam" id="PF22840">
    <property type="entry name" value="CATSPERG_NTD"/>
    <property type="match status" value="1"/>
</dbReference>
<gene>
    <name evidence="2" type="primary">CATSPERG</name>
    <name type="ORF">QtsA-18551</name>
</gene>
<feature type="signal peptide" evidence="3">
    <location>
        <begin position="1"/>
        <end position="35"/>
    </location>
</feature>
<feature type="chain" id="PRO_0000019566" description="Cation channel sperm-associated auxiliary subunit gamma">
    <location>
        <begin position="36"/>
        <end position="1159"/>
    </location>
</feature>
<feature type="topological domain" description="Extracellular" evidence="1">
    <location>
        <begin position="36"/>
        <end position="1065"/>
    </location>
</feature>
<feature type="transmembrane region" description="Helical" evidence="1">
    <location>
        <begin position="1066"/>
        <end position="1087"/>
    </location>
</feature>
<feature type="topological domain" description="Cytoplasmic" evidence="1">
    <location>
        <begin position="1088"/>
        <end position="1159"/>
    </location>
</feature>
<feature type="region of interest" description="Disordered" evidence="4">
    <location>
        <begin position="1138"/>
        <end position="1159"/>
    </location>
</feature>
<feature type="compositionally biased region" description="Basic and acidic residues" evidence="4">
    <location>
        <begin position="1142"/>
        <end position="1159"/>
    </location>
</feature>
<feature type="glycosylation site" description="N-linked (GlcNAc...) asparagine" evidence="3">
    <location>
        <position position="102"/>
    </location>
</feature>
<feature type="glycosylation site" description="N-linked (GlcNAc...) asparagine" evidence="3">
    <location>
        <position position="177"/>
    </location>
</feature>
<feature type="glycosylation site" description="N-linked (GlcNAc...) asparagine" evidence="3">
    <location>
        <position position="355"/>
    </location>
</feature>
<feature type="glycosylation site" description="N-linked (GlcNAc...) asparagine" evidence="3">
    <location>
        <position position="426"/>
    </location>
</feature>
<feature type="glycosylation site" description="N-linked (GlcNAc...) asparagine" evidence="3">
    <location>
        <position position="574"/>
    </location>
</feature>
<feature type="disulfide bond" evidence="1">
    <location>
        <begin position="44"/>
        <end position="105"/>
    </location>
</feature>
<feature type="disulfide bond" evidence="1">
    <location>
        <begin position="159"/>
        <end position="165"/>
    </location>
</feature>
<feature type="disulfide bond" evidence="1">
    <location>
        <begin position="288"/>
        <end position="343"/>
    </location>
</feature>
<feature type="disulfide bond" evidence="1">
    <location>
        <begin position="394"/>
        <end position="402"/>
    </location>
</feature>
<feature type="disulfide bond" evidence="1">
    <location>
        <begin position="638"/>
        <end position="860"/>
    </location>
</feature>
<feature type="disulfide bond" evidence="1">
    <location>
        <begin position="806"/>
        <end position="834"/>
    </location>
</feature>
<feature type="disulfide bond" evidence="1">
    <location>
        <begin position="882"/>
        <end position="1046"/>
    </location>
</feature>
<feature type="disulfide bond" evidence="1">
    <location>
        <begin position="909"/>
        <end position="918"/>
    </location>
</feature>
<feature type="disulfide bond" evidence="1">
    <location>
        <begin position="1010"/>
        <end position="1016"/>
    </location>
</feature>
<accession>Q4R6B2</accession>
<organism>
    <name type="scientific">Macaca fascicularis</name>
    <name type="common">Crab-eating macaque</name>
    <name type="synonym">Cynomolgus monkey</name>
    <dbReference type="NCBI Taxonomy" id="9541"/>
    <lineage>
        <taxon>Eukaryota</taxon>
        <taxon>Metazoa</taxon>
        <taxon>Chordata</taxon>
        <taxon>Craniata</taxon>
        <taxon>Vertebrata</taxon>
        <taxon>Euteleostomi</taxon>
        <taxon>Mammalia</taxon>
        <taxon>Eutheria</taxon>
        <taxon>Euarchontoglires</taxon>
        <taxon>Primates</taxon>
        <taxon>Haplorrhini</taxon>
        <taxon>Catarrhini</taxon>
        <taxon>Cercopithecidae</taxon>
        <taxon>Cercopithecinae</taxon>
        <taxon>Macaca</taxon>
    </lineage>
</organism>
<keyword id="KW-1003">Cell membrane</keyword>
<keyword id="KW-0966">Cell projection</keyword>
<keyword id="KW-0969">Cilium</keyword>
<keyword id="KW-0217">Developmental protein</keyword>
<keyword id="KW-0221">Differentiation</keyword>
<keyword id="KW-1015">Disulfide bond</keyword>
<keyword id="KW-0282">Flagellum</keyword>
<keyword id="KW-0325">Glycoprotein</keyword>
<keyword id="KW-0472">Membrane</keyword>
<keyword id="KW-1185">Reference proteome</keyword>
<keyword id="KW-0732">Signal</keyword>
<keyword id="KW-0744">Spermatogenesis</keyword>
<keyword id="KW-0812">Transmembrane</keyword>
<keyword id="KW-1133">Transmembrane helix</keyword>